<feature type="chain" id="PRO_1000203538" description="Phosphoserine aminotransferase">
    <location>
        <begin position="1"/>
        <end position="361"/>
    </location>
</feature>
<feature type="binding site" evidence="1">
    <location>
        <position position="9"/>
    </location>
    <ligand>
        <name>L-glutamate</name>
        <dbReference type="ChEBI" id="CHEBI:29985"/>
    </ligand>
</feature>
<feature type="binding site" evidence="1">
    <location>
        <position position="42"/>
    </location>
    <ligand>
        <name>L-glutamate</name>
        <dbReference type="ChEBI" id="CHEBI:29985"/>
    </ligand>
</feature>
<feature type="binding site" evidence="1">
    <location>
        <begin position="76"/>
        <end position="77"/>
    </location>
    <ligand>
        <name>pyridoxal 5'-phosphate</name>
        <dbReference type="ChEBI" id="CHEBI:597326"/>
    </ligand>
</feature>
<feature type="binding site" evidence="1">
    <location>
        <position position="102"/>
    </location>
    <ligand>
        <name>pyridoxal 5'-phosphate</name>
        <dbReference type="ChEBI" id="CHEBI:597326"/>
    </ligand>
</feature>
<feature type="binding site" evidence="1">
    <location>
        <position position="153"/>
    </location>
    <ligand>
        <name>pyridoxal 5'-phosphate</name>
        <dbReference type="ChEBI" id="CHEBI:597326"/>
    </ligand>
</feature>
<feature type="binding site" evidence="1">
    <location>
        <position position="173"/>
    </location>
    <ligand>
        <name>pyridoxal 5'-phosphate</name>
        <dbReference type="ChEBI" id="CHEBI:597326"/>
    </ligand>
</feature>
<feature type="binding site" evidence="1">
    <location>
        <position position="196"/>
    </location>
    <ligand>
        <name>pyridoxal 5'-phosphate</name>
        <dbReference type="ChEBI" id="CHEBI:597326"/>
    </ligand>
</feature>
<feature type="binding site" evidence="1">
    <location>
        <begin position="238"/>
        <end position="239"/>
    </location>
    <ligand>
        <name>pyridoxal 5'-phosphate</name>
        <dbReference type="ChEBI" id="CHEBI:597326"/>
    </ligand>
</feature>
<feature type="modified residue" description="N6-(pyridoxal phosphate)lysine" evidence="1">
    <location>
        <position position="197"/>
    </location>
</feature>
<sequence length="361" mass="39757">MSQIFNFSSGPAMLPVEVLRRAEQELCNWRGLGTSVMEISHRSKEFIQVAEEAEKDFRDLLKIPSNYKVLFCHGGARGQFAAVPLNLLGQHGKADYVDGGYWAASAIKEAQKYCTPNVIDAKTTLNGLRAISPMNSWELSDDAAYVHFCPNETIDGIAIHETPDFGDKTVVADLSSTILSTPIDVSRYGVLYAGAQKNIGPAGLTLVVVREDLLGHARKELPSILDYTVLAENDSMFNTPPTFAWYLSGLVFKWLKEQGGVGELDKRNQAKADLLYGTIDSSDFYRNDVAVANRSRMNVPFQLADAALDKLFLEESFAAGLHALKGHRVVGGMRASIYNAMPLAGVKTLTDFMIDFERRHG</sequence>
<name>SERC_ERWT9</name>
<dbReference type="EC" id="2.6.1.52" evidence="1"/>
<dbReference type="EMBL" id="CU468135">
    <property type="protein sequence ID" value="CAO97191.1"/>
    <property type="molecule type" value="Genomic_DNA"/>
</dbReference>
<dbReference type="RefSeq" id="WP_012441862.1">
    <property type="nucleotide sequence ID" value="NC_010694.1"/>
</dbReference>
<dbReference type="SMR" id="B2VC80"/>
<dbReference type="STRING" id="465817.ETA_21450"/>
<dbReference type="KEGG" id="eta:ETA_21450"/>
<dbReference type="eggNOG" id="COG1932">
    <property type="taxonomic scope" value="Bacteria"/>
</dbReference>
<dbReference type="HOGENOM" id="CLU_034866_0_2_6"/>
<dbReference type="OrthoDB" id="9809412at2"/>
<dbReference type="UniPathway" id="UPA00135">
    <property type="reaction ID" value="UER00197"/>
</dbReference>
<dbReference type="UniPathway" id="UPA00244">
    <property type="reaction ID" value="UER00311"/>
</dbReference>
<dbReference type="Proteomes" id="UP000001726">
    <property type="component" value="Chromosome"/>
</dbReference>
<dbReference type="GO" id="GO:0005737">
    <property type="term" value="C:cytoplasm"/>
    <property type="evidence" value="ECO:0007669"/>
    <property type="project" value="UniProtKB-SubCell"/>
</dbReference>
<dbReference type="GO" id="GO:0004648">
    <property type="term" value="F:O-phospho-L-serine:2-oxoglutarate aminotransferase activity"/>
    <property type="evidence" value="ECO:0007669"/>
    <property type="project" value="UniProtKB-UniRule"/>
</dbReference>
<dbReference type="GO" id="GO:0030170">
    <property type="term" value="F:pyridoxal phosphate binding"/>
    <property type="evidence" value="ECO:0007669"/>
    <property type="project" value="UniProtKB-UniRule"/>
</dbReference>
<dbReference type="GO" id="GO:0006564">
    <property type="term" value="P:L-serine biosynthetic process"/>
    <property type="evidence" value="ECO:0007669"/>
    <property type="project" value="UniProtKB-UniRule"/>
</dbReference>
<dbReference type="GO" id="GO:0008615">
    <property type="term" value="P:pyridoxine biosynthetic process"/>
    <property type="evidence" value="ECO:0007669"/>
    <property type="project" value="UniProtKB-UniRule"/>
</dbReference>
<dbReference type="CDD" id="cd00611">
    <property type="entry name" value="PSAT_like"/>
    <property type="match status" value="1"/>
</dbReference>
<dbReference type="FunFam" id="3.40.640.10:FF:000010">
    <property type="entry name" value="Phosphoserine aminotransferase"/>
    <property type="match status" value="1"/>
</dbReference>
<dbReference type="FunFam" id="3.90.1150.10:FF:000006">
    <property type="entry name" value="Phosphoserine aminotransferase"/>
    <property type="match status" value="1"/>
</dbReference>
<dbReference type="Gene3D" id="3.90.1150.10">
    <property type="entry name" value="Aspartate Aminotransferase, domain 1"/>
    <property type="match status" value="1"/>
</dbReference>
<dbReference type="Gene3D" id="3.40.640.10">
    <property type="entry name" value="Type I PLP-dependent aspartate aminotransferase-like (Major domain)"/>
    <property type="match status" value="1"/>
</dbReference>
<dbReference type="HAMAP" id="MF_00160">
    <property type="entry name" value="SerC_aminotrans_5"/>
    <property type="match status" value="1"/>
</dbReference>
<dbReference type="InterPro" id="IPR000192">
    <property type="entry name" value="Aminotrans_V_dom"/>
</dbReference>
<dbReference type="InterPro" id="IPR020578">
    <property type="entry name" value="Aminotrans_V_PyrdxlP_BS"/>
</dbReference>
<dbReference type="InterPro" id="IPR022278">
    <property type="entry name" value="Pser_aminoTfrase"/>
</dbReference>
<dbReference type="InterPro" id="IPR015424">
    <property type="entry name" value="PyrdxlP-dep_Trfase"/>
</dbReference>
<dbReference type="InterPro" id="IPR015421">
    <property type="entry name" value="PyrdxlP-dep_Trfase_major"/>
</dbReference>
<dbReference type="InterPro" id="IPR015422">
    <property type="entry name" value="PyrdxlP-dep_Trfase_small"/>
</dbReference>
<dbReference type="NCBIfam" id="NF003764">
    <property type="entry name" value="PRK05355.1"/>
    <property type="match status" value="1"/>
</dbReference>
<dbReference type="NCBIfam" id="TIGR01364">
    <property type="entry name" value="serC_1"/>
    <property type="match status" value="1"/>
</dbReference>
<dbReference type="PANTHER" id="PTHR43247">
    <property type="entry name" value="PHOSPHOSERINE AMINOTRANSFERASE"/>
    <property type="match status" value="1"/>
</dbReference>
<dbReference type="PANTHER" id="PTHR43247:SF1">
    <property type="entry name" value="PHOSPHOSERINE AMINOTRANSFERASE"/>
    <property type="match status" value="1"/>
</dbReference>
<dbReference type="Pfam" id="PF00266">
    <property type="entry name" value="Aminotran_5"/>
    <property type="match status" value="1"/>
</dbReference>
<dbReference type="PIRSF" id="PIRSF000525">
    <property type="entry name" value="SerC"/>
    <property type="match status" value="1"/>
</dbReference>
<dbReference type="SUPFAM" id="SSF53383">
    <property type="entry name" value="PLP-dependent transferases"/>
    <property type="match status" value="1"/>
</dbReference>
<dbReference type="PROSITE" id="PS00595">
    <property type="entry name" value="AA_TRANSFER_CLASS_5"/>
    <property type="match status" value="1"/>
</dbReference>
<comment type="function">
    <text evidence="1">Catalyzes the reversible conversion of 3-phosphohydroxypyruvate to phosphoserine and of 3-hydroxy-2-oxo-4-phosphonooxybutanoate to phosphohydroxythreonine.</text>
</comment>
<comment type="catalytic activity">
    <reaction evidence="1">
        <text>O-phospho-L-serine + 2-oxoglutarate = 3-phosphooxypyruvate + L-glutamate</text>
        <dbReference type="Rhea" id="RHEA:14329"/>
        <dbReference type="ChEBI" id="CHEBI:16810"/>
        <dbReference type="ChEBI" id="CHEBI:18110"/>
        <dbReference type="ChEBI" id="CHEBI:29985"/>
        <dbReference type="ChEBI" id="CHEBI:57524"/>
        <dbReference type="EC" id="2.6.1.52"/>
    </reaction>
</comment>
<comment type="catalytic activity">
    <reaction evidence="1">
        <text>4-(phosphooxy)-L-threonine + 2-oxoglutarate = (R)-3-hydroxy-2-oxo-4-phosphooxybutanoate + L-glutamate</text>
        <dbReference type="Rhea" id="RHEA:16573"/>
        <dbReference type="ChEBI" id="CHEBI:16810"/>
        <dbReference type="ChEBI" id="CHEBI:29985"/>
        <dbReference type="ChEBI" id="CHEBI:58452"/>
        <dbReference type="ChEBI" id="CHEBI:58538"/>
        <dbReference type="EC" id="2.6.1.52"/>
    </reaction>
</comment>
<comment type="cofactor">
    <cofactor evidence="1">
        <name>pyridoxal 5'-phosphate</name>
        <dbReference type="ChEBI" id="CHEBI:597326"/>
    </cofactor>
    <text evidence="1">Binds 1 pyridoxal phosphate per subunit.</text>
</comment>
<comment type="pathway">
    <text evidence="1">Amino-acid biosynthesis; L-serine biosynthesis; L-serine from 3-phospho-D-glycerate: step 2/3.</text>
</comment>
<comment type="pathway">
    <text evidence="1">Cofactor biosynthesis; pyridoxine 5'-phosphate biosynthesis; pyridoxine 5'-phosphate from D-erythrose 4-phosphate: step 3/5.</text>
</comment>
<comment type="subunit">
    <text evidence="1">Homodimer.</text>
</comment>
<comment type="subcellular location">
    <subcellularLocation>
        <location evidence="1">Cytoplasm</location>
    </subcellularLocation>
</comment>
<comment type="similarity">
    <text evidence="1">Belongs to the class-V pyridoxal-phosphate-dependent aminotransferase family. SerC subfamily.</text>
</comment>
<keyword id="KW-0028">Amino-acid biosynthesis</keyword>
<keyword id="KW-0032">Aminotransferase</keyword>
<keyword id="KW-0963">Cytoplasm</keyword>
<keyword id="KW-0663">Pyridoxal phosphate</keyword>
<keyword id="KW-0664">Pyridoxine biosynthesis</keyword>
<keyword id="KW-1185">Reference proteome</keyword>
<keyword id="KW-0718">Serine biosynthesis</keyword>
<keyword id="KW-0808">Transferase</keyword>
<protein>
    <recommendedName>
        <fullName evidence="1">Phosphoserine aminotransferase</fullName>
        <ecNumber evidence="1">2.6.1.52</ecNumber>
    </recommendedName>
    <alternativeName>
        <fullName evidence="1">Phosphohydroxythreonine aminotransferase</fullName>
        <shortName evidence="1">PSAT</shortName>
    </alternativeName>
</protein>
<accession>B2VC80</accession>
<gene>
    <name evidence="1" type="primary">serC</name>
    <name type="ordered locus">ETA_21450</name>
</gene>
<reference key="1">
    <citation type="journal article" date="2008" name="Environ. Microbiol.">
        <title>The genome of Erwinia tasmaniensis strain Et1/99, a non-pathogenic bacterium in the genus Erwinia.</title>
        <authorList>
            <person name="Kube M."/>
            <person name="Migdoll A.M."/>
            <person name="Mueller I."/>
            <person name="Kuhl H."/>
            <person name="Beck A."/>
            <person name="Reinhardt R."/>
            <person name="Geider K."/>
        </authorList>
    </citation>
    <scope>NUCLEOTIDE SEQUENCE [LARGE SCALE GENOMIC DNA]</scope>
    <source>
        <strain>DSM 17950 / CFBP 7177 / CIP 109463 / NCPPB 4357 / Et1/99</strain>
    </source>
</reference>
<organism>
    <name type="scientific">Erwinia tasmaniensis (strain DSM 17950 / CFBP 7177 / CIP 109463 / NCPPB 4357 / Et1/99)</name>
    <dbReference type="NCBI Taxonomy" id="465817"/>
    <lineage>
        <taxon>Bacteria</taxon>
        <taxon>Pseudomonadati</taxon>
        <taxon>Pseudomonadota</taxon>
        <taxon>Gammaproteobacteria</taxon>
        <taxon>Enterobacterales</taxon>
        <taxon>Erwiniaceae</taxon>
        <taxon>Erwinia</taxon>
    </lineage>
</organism>
<proteinExistence type="inferred from homology"/>
<evidence type="ECO:0000255" key="1">
    <source>
        <dbReference type="HAMAP-Rule" id="MF_00160"/>
    </source>
</evidence>